<sequence length="469" mass="51309">MTSQLHKKGEAWSARFSEPMSELVKRYTSSVFFDKRLALVDIAGSLAHANMLAAQKIISADDLAAIERGMAQIKGEIERGEFEWQLDLEDVHLNIEARLTALIGDAGKRLHTGRSRNDQVATDIRLWLRGEIDRIGGLLNDLRGALLDLAEQNADTIMPGFTHLQVAQPVTFGHHLLAYVEMFSRDAERMRDCRTRVNRLPLGAAALAGTSYPIDRHAVAKTLGFDGICANSLDAVSDRDFAIEFTAASALVMTHVSRFSEELVLWMSPRVGFIDIADRFCTGSSIMPQKKNPDVPELARGKTGRVNGHLMALLTLMKGQPLAYNKDNQEDKEPLFDTVDTVADTLRIFAEMVAGITVKPDAMRAAALQGFSTATDLADYLVKRGLPFRDAHEAVAHAVKVCDDRGIDLADLTLDEMKQELPNVAHLIGEDVFGYLTLEGSVASRNHPGGTAPDQVRAAVKAARAALGQ</sequence>
<gene>
    <name evidence="1" type="primary">argH</name>
    <name type="ordered locus">Bcep18194_A5760</name>
</gene>
<comment type="catalytic activity">
    <reaction evidence="1">
        <text>2-(N(omega)-L-arginino)succinate = fumarate + L-arginine</text>
        <dbReference type="Rhea" id="RHEA:24020"/>
        <dbReference type="ChEBI" id="CHEBI:29806"/>
        <dbReference type="ChEBI" id="CHEBI:32682"/>
        <dbReference type="ChEBI" id="CHEBI:57472"/>
        <dbReference type="EC" id="4.3.2.1"/>
    </reaction>
</comment>
<comment type="pathway">
    <text evidence="1">Amino-acid biosynthesis; L-arginine biosynthesis; L-arginine from L-ornithine and carbamoyl phosphate: step 3/3.</text>
</comment>
<comment type="subcellular location">
    <subcellularLocation>
        <location evidence="1">Cytoplasm</location>
    </subcellularLocation>
</comment>
<comment type="similarity">
    <text evidence="1">Belongs to the lyase 1 family. Argininosuccinate lyase subfamily.</text>
</comment>
<keyword id="KW-0028">Amino-acid biosynthesis</keyword>
<keyword id="KW-0055">Arginine biosynthesis</keyword>
<keyword id="KW-0963">Cytoplasm</keyword>
<keyword id="KW-0456">Lyase</keyword>
<proteinExistence type="inferred from homology"/>
<protein>
    <recommendedName>
        <fullName evidence="1">Argininosuccinate lyase</fullName>
        <shortName evidence="1">ASAL</shortName>
        <ecNumber evidence="1">4.3.2.1</ecNumber>
    </recommendedName>
    <alternativeName>
        <fullName evidence="1">Arginosuccinase</fullName>
    </alternativeName>
</protein>
<feature type="chain" id="PRO_0000240718" description="Argininosuccinate lyase">
    <location>
        <begin position="1"/>
        <end position="469"/>
    </location>
</feature>
<accession>Q39DW2</accession>
<organism>
    <name type="scientific">Burkholderia lata (strain ATCC 17760 / DSM 23089 / LMG 22485 / NCIMB 9086 / R18194 / 383)</name>
    <dbReference type="NCBI Taxonomy" id="482957"/>
    <lineage>
        <taxon>Bacteria</taxon>
        <taxon>Pseudomonadati</taxon>
        <taxon>Pseudomonadota</taxon>
        <taxon>Betaproteobacteria</taxon>
        <taxon>Burkholderiales</taxon>
        <taxon>Burkholderiaceae</taxon>
        <taxon>Burkholderia</taxon>
        <taxon>Burkholderia cepacia complex</taxon>
    </lineage>
</organism>
<name>ARLY_BURL3</name>
<evidence type="ECO:0000255" key="1">
    <source>
        <dbReference type="HAMAP-Rule" id="MF_00006"/>
    </source>
</evidence>
<reference key="1">
    <citation type="submission" date="2005-10" db="EMBL/GenBank/DDBJ databases">
        <title>Complete sequence of chromosome 1 of Burkholderia sp. 383.</title>
        <authorList>
            <consortium name="US DOE Joint Genome Institute"/>
            <person name="Copeland A."/>
            <person name="Lucas S."/>
            <person name="Lapidus A."/>
            <person name="Barry K."/>
            <person name="Detter J.C."/>
            <person name="Glavina T."/>
            <person name="Hammon N."/>
            <person name="Israni S."/>
            <person name="Pitluck S."/>
            <person name="Chain P."/>
            <person name="Malfatti S."/>
            <person name="Shin M."/>
            <person name="Vergez L."/>
            <person name="Schmutz J."/>
            <person name="Larimer F."/>
            <person name="Land M."/>
            <person name="Kyrpides N."/>
            <person name="Lykidis A."/>
            <person name="Richardson P."/>
        </authorList>
    </citation>
    <scope>NUCLEOTIDE SEQUENCE [LARGE SCALE GENOMIC DNA]</scope>
    <source>
        <strain>ATCC 17760 / DSM 23089 / LMG 22485 / NCIMB 9086 / R18194 / 383</strain>
    </source>
</reference>
<dbReference type="EC" id="4.3.2.1" evidence="1"/>
<dbReference type="EMBL" id="CP000151">
    <property type="protein sequence ID" value="ABB09354.1"/>
    <property type="molecule type" value="Genomic_DNA"/>
</dbReference>
<dbReference type="RefSeq" id="WP_011352879.1">
    <property type="nucleotide sequence ID" value="NC_007510.1"/>
</dbReference>
<dbReference type="SMR" id="Q39DW2"/>
<dbReference type="GeneID" id="45095644"/>
<dbReference type="KEGG" id="bur:Bcep18194_A5760"/>
<dbReference type="PATRIC" id="fig|482957.22.peg.2740"/>
<dbReference type="HOGENOM" id="CLU_027272_2_3_4"/>
<dbReference type="UniPathway" id="UPA00068">
    <property type="reaction ID" value="UER00114"/>
</dbReference>
<dbReference type="Proteomes" id="UP000002705">
    <property type="component" value="Chromosome 1"/>
</dbReference>
<dbReference type="GO" id="GO:0005829">
    <property type="term" value="C:cytosol"/>
    <property type="evidence" value="ECO:0007669"/>
    <property type="project" value="TreeGrafter"/>
</dbReference>
<dbReference type="GO" id="GO:0004056">
    <property type="term" value="F:argininosuccinate lyase activity"/>
    <property type="evidence" value="ECO:0007669"/>
    <property type="project" value="UniProtKB-UniRule"/>
</dbReference>
<dbReference type="GO" id="GO:0042450">
    <property type="term" value="P:arginine biosynthetic process via ornithine"/>
    <property type="evidence" value="ECO:0007669"/>
    <property type="project" value="InterPro"/>
</dbReference>
<dbReference type="GO" id="GO:0006526">
    <property type="term" value="P:L-arginine biosynthetic process"/>
    <property type="evidence" value="ECO:0007669"/>
    <property type="project" value="UniProtKB-UniRule"/>
</dbReference>
<dbReference type="CDD" id="cd01359">
    <property type="entry name" value="Argininosuccinate_lyase"/>
    <property type="match status" value="1"/>
</dbReference>
<dbReference type="FunFam" id="1.10.275.10:FF:000002">
    <property type="entry name" value="Argininosuccinate lyase"/>
    <property type="match status" value="1"/>
</dbReference>
<dbReference type="FunFam" id="1.10.40.30:FF:000001">
    <property type="entry name" value="Argininosuccinate lyase"/>
    <property type="match status" value="1"/>
</dbReference>
<dbReference type="FunFam" id="1.20.200.10:FF:000015">
    <property type="entry name" value="argininosuccinate lyase isoform X2"/>
    <property type="match status" value="1"/>
</dbReference>
<dbReference type="Gene3D" id="1.10.40.30">
    <property type="entry name" value="Fumarase/aspartase (C-terminal domain)"/>
    <property type="match status" value="1"/>
</dbReference>
<dbReference type="Gene3D" id="1.20.200.10">
    <property type="entry name" value="Fumarase/aspartase (Central domain)"/>
    <property type="match status" value="1"/>
</dbReference>
<dbReference type="Gene3D" id="1.10.275.10">
    <property type="entry name" value="Fumarase/aspartase (N-terminal domain)"/>
    <property type="match status" value="1"/>
</dbReference>
<dbReference type="HAMAP" id="MF_00006">
    <property type="entry name" value="Arg_succ_lyase"/>
    <property type="match status" value="1"/>
</dbReference>
<dbReference type="InterPro" id="IPR029419">
    <property type="entry name" value="Arg_succ_lyase_C"/>
</dbReference>
<dbReference type="InterPro" id="IPR009049">
    <property type="entry name" value="Argininosuccinate_lyase"/>
</dbReference>
<dbReference type="InterPro" id="IPR024083">
    <property type="entry name" value="Fumarase/histidase_N"/>
</dbReference>
<dbReference type="InterPro" id="IPR020557">
    <property type="entry name" value="Fumarate_lyase_CS"/>
</dbReference>
<dbReference type="InterPro" id="IPR000362">
    <property type="entry name" value="Fumarate_lyase_fam"/>
</dbReference>
<dbReference type="InterPro" id="IPR022761">
    <property type="entry name" value="Fumarate_lyase_N"/>
</dbReference>
<dbReference type="InterPro" id="IPR008948">
    <property type="entry name" value="L-Aspartase-like"/>
</dbReference>
<dbReference type="NCBIfam" id="TIGR00838">
    <property type="entry name" value="argH"/>
    <property type="match status" value="1"/>
</dbReference>
<dbReference type="PANTHER" id="PTHR43814">
    <property type="entry name" value="ARGININOSUCCINATE LYASE"/>
    <property type="match status" value="1"/>
</dbReference>
<dbReference type="PANTHER" id="PTHR43814:SF1">
    <property type="entry name" value="ARGININOSUCCINATE LYASE"/>
    <property type="match status" value="1"/>
</dbReference>
<dbReference type="Pfam" id="PF14698">
    <property type="entry name" value="ASL_C2"/>
    <property type="match status" value="1"/>
</dbReference>
<dbReference type="Pfam" id="PF00206">
    <property type="entry name" value="Lyase_1"/>
    <property type="match status" value="1"/>
</dbReference>
<dbReference type="PRINTS" id="PR00145">
    <property type="entry name" value="ARGSUCLYASE"/>
</dbReference>
<dbReference type="PRINTS" id="PR00149">
    <property type="entry name" value="FUMRATELYASE"/>
</dbReference>
<dbReference type="SUPFAM" id="SSF48557">
    <property type="entry name" value="L-aspartase-like"/>
    <property type="match status" value="1"/>
</dbReference>
<dbReference type="PROSITE" id="PS00163">
    <property type="entry name" value="FUMARATE_LYASES"/>
    <property type="match status" value="1"/>
</dbReference>